<sequence length="152" mass="17545">MSLVANEEFQHILRVLNTNVDGKQKIMFALTSIKGIGRRLANIVCKKADVDMNKRAGELSAAEIDNLMTIVANPRQFKIPDWFLNRQKDYKDGKYSQVVSNALDMKLRDDLERLKKIRNHRGLRHYWGLRVRGQHTKTTGRRGKTVGVSKKR</sequence>
<reference key="1">
    <citation type="journal article" date="1994" name="EMBO J.">
        <title>An S18 ribosomal protein gene copy at the Arabidopsis PFL locus affects plant development by its specific expression in meristems.</title>
        <authorList>
            <person name="van Lijsebettens M."/>
            <person name="Vanderhaeghen R."/>
            <person name="de Block M."/>
            <person name="Bauw G."/>
            <person name="Villarroel R."/>
            <person name="Lister C."/>
            <person name="Dean C."/>
            <person name="van Montagu M."/>
        </authorList>
    </citation>
    <scope>NUCLEOTIDE SEQUENCE [GENOMIC DNA / MRNA]</scope>
    <scope>PROTEIN SEQUENCE OF 56-64 AND 95-106 (RPS18A AND RPS18B)</scope>
    <source>
        <strain>cv. C24</strain>
        <strain>cv. Columbia</strain>
    </source>
</reference>
<reference key="2">
    <citation type="journal article" date="1997" name="FEBS Lett.">
        <title>Sequence analysis of a 24-kb contiguous genomic region at the Arabidopsis thaliana PFL locus on chromosome 1.</title>
        <authorList>
            <person name="Terryn N."/>
            <person name="Neyt P."/>
            <person name="de Clercq R."/>
            <person name="de Keyser A."/>
            <person name="van den Daele H."/>
            <person name="Ardiles W."/>
            <person name="Dehais P."/>
            <person name="Rouze P."/>
            <person name="Gielen J."/>
            <person name="Villarroel R."/>
            <person name="van Montagu M."/>
        </authorList>
    </citation>
    <scope>NUCLEOTIDE SEQUENCE [GENOMIC DNA] (RPS18A)</scope>
    <source>
        <strain>cv. Columbia</strain>
    </source>
</reference>
<reference key="3">
    <citation type="journal article" date="2000" name="Nature">
        <title>Sequence and analysis of chromosome 1 of the plant Arabidopsis thaliana.</title>
        <authorList>
            <person name="Theologis A."/>
            <person name="Ecker J.R."/>
            <person name="Palm C.J."/>
            <person name="Federspiel N.A."/>
            <person name="Kaul S."/>
            <person name="White O."/>
            <person name="Alonso J."/>
            <person name="Altafi H."/>
            <person name="Araujo R."/>
            <person name="Bowman C.L."/>
            <person name="Brooks S.Y."/>
            <person name="Buehler E."/>
            <person name="Chan A."/>
            <person name="Chao Q."/>
            <person name="Chen H."/>
            <person name="Cheuk R.F."/>
            <person name="Chin C.W."/>
            <person name="Chung M.K."/>
            <person name="Conn L."/>
            <person name="Conway A.B."/>
            <person name="Conway A.R."/>
            <person name="Creasy T.H."/>
            <person name="Dewar K."/>
            <person name="Dunn P."/>
            <person name="Etgu P."/>
            <person name="Feldblyum T.V."/>
            <person name="Feng J.-D."/>
            <person name="Fong B."/>
            <person name="Fujii C.Y."/>
            <person name="Gill J.E."/>
            <person name="Goldsmith A.D."/>
            <person name="Haas B."/>
            <person name="Hansen N.F."/>
            <person name="Hughes B."/>
            <person name="Huizar L."/>
            <person name="Hunter J.L."/>
            <person name="Jenkins J."/>
            <person name="Johnson-Hopson C."/>
            <person name="Khan S."/>
            <person name="Khaykin E."/>
            <person name="Kim C.J."/>
            <person name="Koo H.L."/>
            <person name="Kremenetskaia I."/>
            <person name="Kurtz D.B."/>
            <person name="Kwan A."/>
            <person name="Lam B."/>
            <person name="Langin-Hooper S."/>
            <person name="Lee A."/>
            <person name="Lee J.M."/>
            <person name="Lenz C.A."/>
            <person name="Li J.H."/>
            <person name="Li Y.-P."/>
            <person name="Lin X."/>
            <person name="Liu S.X."/>
            <person name="Liu Z.A."/>
            <person name="Luros J.S."/>
            <person name="Maiti R."/>
            <person name="Marziali A."/>
            <person name="Militscher J."/>
            <person name="Miranda M."/>
            <person name="Nguyen M."/>
            <person name="Nierman W.C."/>
            <person name="Osborne B.I."/>
            <person name="Pai G."/>
            <person name="Peterson J."/>
            <person name="Pham P.K."/>
            <person name="Rizzo M."/>
            <person name="Rooney T."/>
            <person name="Rowley D."/>
            <person name="Sakano H."/>
            <person name="Salzberg S.L."/>
            <person name="Schwartz J.R."/>
            <person name="Shinn P."/>
            <person name="Southwick A.M."/>
            <person name="Sun H."/>
            <person name="Tallon L.J."/>
            <person name="Tambunga G."/>
            <person name="Toriumi M.J."/>
            <person name="Town C.D."/>
            <person name="Utterback T."/>
            <person name="Van Aken S."/>
            <person name="Vaysberg M."/>
            <person name="Vysotskaia V.S."/>
            <person name="Walker M."/>
            <person name="Wu D."/>
            <person name="Yu G."/>
            <person name="Fraser C.M."/>
            <person name="Venter J.C."/>
            <person name="Davis R.W."/>
        </authorList>
    </citation>
    <scope>NUCLEOTIDE SEQUENCE [LARGE SCALE GENOMIC DNA] (RPS18A AND RPS18B)</scope>
    <source>
        <strain>cv. Columbia</strain>
    </source>
</reference>
<reference key="4">
    <citation type="journal article" date="1999" name="Nature">
        <title>Sequence and analysis of chromosome 4 of the plant Arabidopsis thaliana.</title>
        <authorList>
            <person name="Mayer K.F.X."/>
            <person name="Schueller C."/>
            <person name="Wambutt R."/>
            <person name="Murphy G."/>
            <person name="Volckaert G."/>
            <person name="Pohl T."/>
            <person name="Duesterhoeft A."/>
            <person name="Stiekema W."/>
            <person name="Entian K.-D."/>
            <person name="Terryn N."/>
            <person name="Harris B."/>
            <person name="Ansorge W."/>
            <person name="Brandt P."/>
            <person name="Grivell L.A."/>
            <person name="Rieger M."/>
            <person name="Weichselgartner M."/>
            <person name="de Simone V."/>
            <person name="Obermaier B."/>
            <person name="Mache R."/>
            <person name="Mueller M."/>
            <person name="Kreis M."/>
            <person name="Delseny M."/>
            <person name="Puigdomenech P."/>
            <person name="Watson M."/>
            <person name="Schmidtheini T."/>
            <person name="Reichert B."/>
            <person name="Portetelle D."/>
            <person name="Perez-Alonso M."/>
            <person name="Boutry M."/>
            <person name="Bancroft I."/>
            <person name="Vos P."/>
            <person name="Hoheisel J."/>
            <person name="Zimmermann W."/>
            <person name="Wedler H."/>
            <person name="Ridley P."/>
            <person name="Langham S.-A."/>
            <person name="McCullagh B."/>
            <person name="Bilham L."/>
            <person name="Robben J."/>
            <person name="van der Schueren J."/>
            <person name="Grymonprez B."/>
            <person name="Chuang Y.-J."/>
            <person name="Vandenbussche F."/>
            <person name="Braeken M."/>
            <person name="Weltjens I."/>
            <person name="Voet M."/>
            <person name="Bastiaens I."/>
            <person name="Aert R."/>
            <person name="Defoor E."/>
            <person name="Weitzenegger T."/>
            <person name="Bothe G."/>
            <person name="Ramsperger U."/>
            <person name="Hilbert H."/>
            <person name="Braun M."/>
            <person name="Holzer E."/>
            <person name="Brandt A."/>
            <person name="Peters S."/>
            <person name="van Staveren M."/>
            <person name="Dirkse W."/>
            <person name="Mooijman P."/>
            <person name="Klein Lankhorst R."/>
            <person name="Rose M."/>
            <person name="Hauf J."/>
            <person name="Koetter P."/>
            <person name="Berneiser S."/>
            <person name="Hempel S."/>
            <person name="Feldpausch M."/>
            <person name="Lamberth S."/>
            <person name="Van den Daele H."/>
            <person name="De Keyser A."/>
            <person name="Buysshaert C."/>
            <person name="Gielen J."/>
            <person name="Villarroel R."/>
            <person name="De Clercq R."/>
            <person name="van Montagu M."/>
            <person name="Rogers J."/>
            <person name="Cronin A."/>
            <person name="Quail M.A."/>
            <person name="Bray-Allen S."/>
            <person name="Clark L."/>
            <person name="Doggett J."/>
            <person name="Hall S."/>
            <person name="Kay M."/>
            <person name="Lennard N."/>
            <person name="McLay K."/>
            <person name="Mayes R."/>
            <person name="Pettett A."/>
            <person name="Rajandream M.A."/>
            <person name="Lyne M."/>
            <person name="Benes V."/>
            <person name="Rechmann S."/>
            <person name="Borkova D."/>
            <person name="Bloecker H."/>
            <person name="Scharfe M."/>
            <person name="Grimm M."/>
            <person name="Loehnert T.-H."/>
            <person name="Dose S."/>
            <person name="de Haan M."/>
            <person name="Maarse A.C."/>
            <person name="Schaefer M."/>
            <person name="Mueller-Auer S."/>
            <person name="Gabel C."/>
            <person name="Fuchs M."/>
            <person name="Fartmann B."/>
            <person name="Granderath K."/>
            <person name="Dauner D."/>
            <person name="Herzl A."/>
            <person name="Neumann S."/>
            <person name="Argiriou A."/>
            <person name="Vitale D."/>
            <person name="Liguori R."/>
            <person name="Piravandi E."/>
            <person name="Massenet O."/>
            <person name="Quigley F."/>
            <person name="Clabauld G."/>
            <person name="Muendlein A."/>
            <person name="Felber R."/>
            <person name="Schnabl S."/>
            <person name="Hiller R."/>
            <person name="Schmidt W."/>
            <person name="Lecharny A."/>
            <person name="Aubourg S."/>
            <person name="Chefdor F."/>
            <person name="Cooke R."/>
            <person name="Berger C."/>
            <person name="Monfort A."/>
            <person name="Casacuberta E."/>
            <person name="Gibbons T."/>
            <person name="Weber N."/>
            <person name="Vandenbol M."/>
            <person name="Bargues M."/>
            <person name="Terol J."/>
            <person name="Torres A."/>
            <person name="Perez-Perez A."/>
            <person name="Purnelle B."/>
            <person name="Bent E."/>
            <person name="Johnson S."/>
            <person name="Tacon D."/>
            <person name="Jesse T."/>
            <person name="Heijnen L."/>
            <person name="Schwarz S."/>
            <person name="Scholler P."/>
            <person name="Heber S."/>
            <person name="Francs P."/>
            <person name="Bielke C."/>
            <person name="Frishman D."/>
            <person name="Haase D."/>
            <person name="Lemcke K."/>
            <person name="Mewes H.-W."/>
            <person name="Stocker S."/>
            <person name="Zaccaria P."/>
            <person name="Bevan M."/>
            <person name="Wilson R.K."/>
            <person name="de la Bastide M."/>
            <person name="Habermann K."/>
            <person name="Parnell L."/>
            <person name="Dedhia N."/>
            <person name="Gnoj L."/>
            <person name="Schutz K."/>
            <person name="Huang E."/>
            <person name="Spiegel L."/>
            <person name="Sekhon M."/>
            <person name="Murray J."/>
            <person name="Sheet P."/>
            <person name="Cordes M."/>
            <person name="Abu-Threideh J."/>
            <person name="Stoneking T."/>
            <person name="Kalicki J."/>
            <person name="Graves T."/>
            <person name="Harmon G."/>
            <person name="Edwards J."/>
            <person name="Latreille P."/>
            <person name="Courtney L."/>
            <person name="Cloud J."/>
            <person name="Abbott A."/>
            <person name="Scott K."/>
            <person name="Johnson D."/>
            <person name="Minx P."/>
            <person name="Bentley D."/>
            <person name="Fulton B."/>
            <person name="Miller N."/>
            <person name="Greco T."/>
            <person name="Kemp K."/>
            <person name="Kramer J."/>
            <person name="Fulton L."/>
            <person name="Mardis E."/>
            <person name="Dante M."/>
            <person name="Pepin K."/>
            <person name="Hillier L.W."/>
            <person name="Nelson J."/>
            <person name="Spieth J."/>
            <person name="Ryan E."/>
            <person name="Andrews S."/>
            <person name="Geisel C."/>
            <person name="Layman D."/>
            <person name="Du H."/>
            <person name="Ali J."/>
            <person name="Berghoff A."/>
            <person name="Jones K."/>
            <person name="Drone K."/>
            <person name="Cotton M."/>
            <person name="Joshu C."/>
            <person name="Antonoiu B."/>
            <person name="Zidanic M."/>
            <person name="Strong C."/>
            <person name="Sun H."/>
            <person name="Lamar B."/>
            <person name="Yordan C."/>
            <person name="Ma P."/>
            <person name="Zhong J."/>
            <person name="Preston R."/>
            <person name="Vil D."/>
            <person name="Shekher M."/>
            <person name="Matero A."/>
            <person name="Shah R."/>
            <person name="Swaby I.K."/>
            <person name="O'Shaughnessy A."/>
            <person name="Rodriguez M."/>
            <person name="Hoffman J."/>
            <person name="Till S."/>
            <person name="Granat S."/>
            <person name="Shohdy N."/>
            <person name="Hasegawa A."/>
            <person name="Hameed A."/>
            <person name="Lodhi M."/>
            <person name="Johnson A."/>
            <person name="Chen E."/>
            <person name="Marra M.A."/>
            <person name="Martienssen R."/>
            <person name="McCombie W.R."/>
        </authorList>
    </citation>
    <scope>NUCLEOTIDE SEQUENCE [LARGE SCALE GENOMIC DNA] (RPS18C)</scope>
    <source>
        <strain>cv. Columbia</strain>
    </source>
</reference>
<reference key="5">
    <citation type="journal article" date="2017" name="Plant J.">
        <title>Araport11: a complete reannotation of the Arabidopsis thaliana reference genome.</title>
        <authorList>
            <person name="Cheng C.Y."/>
            <person name="Krishnakumar V."/>
            <person name="Chan A.P."/>
            <person name="Thibaud-Nissen F."/>
            <person name="Schobel S."/>
            <person name="Town C.D."/>
        </authorList>
    </citation>
    <scope>GENOME REANNOTATION</scope>
    <source>
        <strain>cv. Columbia</strain>
    </source>
</reference>
<reference key="6">
    <citation type="journal article" date="2003" name="Science">
        <title>Empirical analysis of transcriptional activity in the Arabidopsis genome.</title>
        <authorList>
            <person name="Yamada K."/>
            <person name="Lim J."/>
            <person name="Dale J.M."/>
            <person name="Chen H."/>
            <person name="Shinn P."/>
            <person name="Palm C.J."/>
            <person name="Southwick A.M."/>
            <person name="Wu H.C."/>
            <person name="Kim C.J."/>
            <person name="Nguyen M."/>
            <person name="Pham P.K."/>
            <person name="Cheuk R.F."/>
            <person name="Karlin-Newmann G."/>
            <person name="Liu S.X."/>
            <person name="Lam B."/>
            <person name="Sakano H."/>
            <person name="Wu T."/>
            <person name="Yu G."/>
            <person name="Miranda M."/>
            <person name="Quach H.L."/>
            <person name="Tripp M."/>
            <person name="Chang C.H."/>
            <person name="Lee J.M."/>
            <person name="Toriumi M.J."/>
            <person name="Chan M.M."/>
            <person name="Tang C.C."/>
            <person name="Onodera C.S."/>
            <person name="Deng J.M."/>
            <person name="Akiyama K."/>
            <person name="Ansari Y."/>
            <person name="Arakawa T."/>
            <person name="Banh J."/>
            <person name="Banno F."/>
            <person name="Bowser L."/>
            <person name="Brooks S.Y."/>
            <person name="Carninci P."/>
            <person name="Chao Q."/>
            <person name="Choy N."/>
            <person name="Enju A."/>
            <person name="Goldsmith A.D."/>
            <person name="Gurjal M."/>
            <person name="Hansen N.F."/>
            <person name="Hayashizaki Y."/>
            <person name="Johnson-Hopson C."/>
            <person name="Hsuan V.W."/>
            <person name="Iida K."/>
            <person name="Karnes M."/>
            <person name="Khan S."/>
            <person name="Koesema E."/>
            <person name="Ishida J."/>
            <person name="Jiang P.X."/>
            <person name="Jones T."/>
            <person name="Kawai J."/>
            <person name="Kamiya A."/>
            <person name="Meyers C."/>
            <person name="Nakajima M."/>
            <person name="Narusaka M."/>
            <person name="Seki M."/>
            <person name="Sakurai T."/>
            <person name="Satou M."/>
            <person name="Tamse R."/>
            <person name="Vaysberg M."/>
            <person name="Wallender E.K."/>
            <person name="Wong C."/>
            <person name="Yamamura Y."/>
            <person name="Yuan S."/>
            <person name="Shinozaki K."/>
            <person name="Davis R.W."/>
            <person name="Theologis A."/>
            <person name="Ecker J.R."/>
        </authorList>
    </citation>
    <scope>NUCLEOTIDE SEQUENCE [LARGE SCALE MRNA] (RPS18A; RPS18B AND RPS18C)</scope>
    <source>
        <strain>cv. Columbia</strain>
    </source>
</reference>
<reference key="7">
    <citation type="submission" date="2002-03" db="EMBL/GenBank/DDBJ databases">
        <title>Full-length cDNA from Arabidopsis thaliana.</title>
        <authorList>
            <person name="Brover V.V."/>
            <person name="Troukhan M.E."/>
            <person name="Alexandrov N.A."/>
            <person name="Lu Y.-P."/>
            <person name="Flavell R.B."/>
            <person name="Feldmann K.A."/>
        </authorList>
    </citation>
    <scope>NUCLEOTIDE SEQUENCE [LARGE SCALE MRNA] (RPS18A)</scope>
</reference>
<reference key="8">
    <citation type="journal article" date="2001" name="Plant Physiol.">
        <title>The organization of cytoplasmic ribosomal protein genes in the Arabidopsis genome.</title>
        <authorList>
            <person name="Barakat A."/>
            <person name="Szick-Miranda K."/>
            <person name="Chang I.-F."/>
            <person name="Guyot R."/>
            <person name="Blanc G."/>
            <person name="Cooke R."/>
            <person name="Delseny M."/>
            <person name="Bailey-Serres J."/>
        </authorList>
    </citation>
    <scope>GENE FAMILY ORGANIZATION</scope>
    <scope>NOMENCLATURE</scope>
</reference>
<reference key="9">
    <citation type="journal article" date="2007" name="Mol. Cell. Proteomics">
        <title>Multidimensional protein identification technology (MudPIT) analysis of ubiquitinated proteins in plants.</title>
        <authorList>
            <person name="Maor R."/>
            <person name="Jones A."/>
            <person name="Nuehse T.S."/>
            <person name="Studholme D.J."/>
            <person name="Peck S.C."/>
            <person name="Shirasu K."/>
        </authorList>
    </citation>
    <scope>IDENTIFICATION BY MASS SPECTROMETRY [LARGE SCALE ANALYSIS]</scope>
    <source>
        <strain>cv. Landsberg erecta</strain>
    </source>
</reference>
<reference key="10">
    <citation type="journal article" date="2012" name="Mol. Cell. Proteomics">
        <title>Comparative large-scale characterisation of plant vs. mammal proteins reveals similar and idiosyncratic N-alpha acetylation features.</title>
        <authorList>
            <person name="Bienvenut W.V."/>
            <person name="Sumpton D."/>
            <person name="Martinez A."/>
            <person name="Lilla S."/>
            <person name="Espagne C."/>
            <person name="Meinnel T."/>
            <person name="Giglione C."/>
        </authorList>
    </citation>
    <scope>ACETYLATION [LARGE SCALE ANALYSIS] AT SER-2</scope>
    <scope>CLEAVAGE OF INITIATOR METHIONINE [LARGE SCALE ANALYSIS]</scope>
    <scope>IDENTIFICATION BY MASS SPECTROMETRY [LARGE SCALE ANALYSIS]</scope>
</reference>
<reference key="11">
    <citation type="journal article" date="2023" name="Plant Cell">
        <title>An updated nomenclature for plant ribosomal protein genes.</title>
        <authorList>
            <person name="Scarpin M.R."/>
            <person name="Busche M."/>
            <person name="Martinez R.E."/>
            <person name="Harper L.C."/>
            <person name="Reiser L."/>
            <person name="Szakonyi D."/>
            <person name="Merchante C."/>
            <person name="Lan T."/>
            <person name="Xiong W."/>
            <person name="Mo B."/>
            <person name="Tang G."/>
            <person name="Chen X."/>
            <person name="Bailey-Serres J."/>
            <person name="Browning K.S."/>
            <person name="Brunkard J.O."/>
        </authorList>
    </citation>
    <scope>NOMENCLATURE</scope>
</reference>
<dbReference type="EMBL" id="Z23165">
    <property type="protein sequence ID" value="CAA80684.1"/>
    <property type="molecule type" value="Genomic_DNA"/>
</dbReference>
<dbReference type="EMBL" id="Z28701">
    <property type="protein sequence ID" value="CAA82273.1"/>
    <property type="molecule type" value="mRNA"/>
</dbReference>
<dbReference type="EMBL" id="Z28702">
    <property type="protein sequence ID" value="CAA82274.1"/>
    <property type="molecule type" value="mRNA"/>
</dbReference>
<dbReference type="EMBL" id="Z28962">
    <property type="protein sequence ID" value="CAA82275.1"/>
    <property type="molecule type" value="Genomic_DNA"/>
</dbReference>
<dbReference type="EMBL" id="Y12227">
    <property type="protein sequence ID" value="CAA72909.1"/>
    <property type="molecule type" value="Genomic_DNA"/>
</dbReference>
<dbReference type="EMBL" id="AC003979">
    <property type="protein sequence ID" value="AAC25506.1"/>
    <property type="molecule type" value="Genomic_DNA"/>
</dbReference>
<dbReference type="EMBL" id="AC015446">
    <property type="protein sequence ID" value="AAG12534.1"/>
    <property type="molecule type" value="Genomic_DNA"/>
</dbReference>
<dbReference type="EMBL" id="AC079286">
    <property type="protein sequence ID" value="AAG12853.1"/>
    <property type="molecule type" value="Genomic_DNA"/>
</dbReference>
<dbReference type="EMBL" id="AL049482">
    <property type="protein sequence ID" value="CAB39647.1"/>
    <property type="molecule type" value="Genomic_DNA"/>
</dbReference>
<dbReference type="EMBL" id="AL161515">
    <property type="protein sequence ID" value="CAB78103.1"/>
    <property type="molecule type" value="Genomic_DNA"/>
</dbReference>
<dbReference type="EMBL" id="CP002684">
    <property type="protein sequence ID" value="AEE30287.1"/>
    <property type="molecule type" value="Genomic_DNA"/>
</dbReference>
<dbReference type="EMBL" id="CP002684">
    <property type="protein sequence ID" value="AEE31659.1"/>
    <property type="molecule type" value="Genomic_DNA"/>
</dbReference>
<dbReference type="EMBL" id="CP002687">
    <property type="protein sequence ID" value="AEE82800.1"/>
    <property type="molecule type" value="Genomic_DNA"/>
</dbReference>
<dbReference type="EMBL" id="AF411781">
    <property type="protein sequence ID" value="AAL06471.1"/>
    <property type="molecule type" value="mRNA"/>
</dbReference>
<dbReference type="EMBL" id="AF386941">
    <property type="protein sequence ID" value="AAK62386.1"/>
    <property type="molecule type" value="mRNA"/>
</dbReference>
<dbReference type="EMBL" id="AF370463">
    <property type="protein sequence ID" value="AAK43840.1"/>
    <property type="molecule type" value="mRNA"/>
</dbReference>
<dbReference type="EMBL" id="AY034965">
    <property type="protein sequence ID" value="AAK59471.1"/>
    <property type="molecule type" value="mRNA"/>
</dbReference>
<dbReference type="EMBL" id="AY064680">
    <property type="protein sequence ID" value="AAL47385.1"/>
    <property type="molecule type" value="mRNA"/>
</dbReference>
<dbReference type="EMBL" id="AY070029">
    <property type="protein sequence ID" value="AAL47500.1"/>
    <property type="molecule type" value="mRNA"/>
</dbReference>
<dbReference type="EMBL" id="AY086334">
    <property type="protein sequence ID" value="AAM64403.1"/>
    <property type="molecule type" value="mRNA"/>
</dbReference>
<dbReference type="EMBL" id="AY086800">
    <property type="protein sequence ID" value="AAM63849.1"/>
    <property type="molecule type" value="mRNA"/>
</dbReference>
<dbReference type="EMBL" id="BT006539">
    <property type="protein sequence ID" value="AAP21347.1"/>
    <property type="molecule type" value="mRNA"/>
</dbReference>
<dbReference type="EMBL" id="AY087428">
    <property type="protein sequence ID" value="AAM64976.1"/>
    <property type="molecule type" value="mRNA"/>
</dbReference>
<dbReference type="PIR" id="S46223">
    <property type="entry name" value="S37496"/>
</dbReference>
<dbReference type="RefSeq" id="NP_173692.1">
    <property type="nucleotide sequence ID" value="NM_102125.4"/>
</dbReference>
<dbReference type="RefSeq" id="NP_192718.1">
    <property type="nucleotide sequence ID" value="NM_117048.4"/>
</dbReference>
<dbReference type="RefSeq" id="NP_564434.1">
    <property type="nucleotide sequence ID" value="NM_103125.5"/>
</dbReference>
<dbReference type="SMR" id="P34788"/>
<dbReference type="BioGRID" id="11868">
    <property type="interactions" value="152"/>
</dbReference>
<dbReference type="BioGRID" id="24123">
    <property type="interactions" value="152"/>
</dbReference>
<dbReference type="BioGRID" id="25532">
    <property type="interactions" value="150"/>
</dbReference>
<dbReference type="FunCoup" id="P34788">
    <property type="interactions" value="3524"/>
</dbReference>
<dbReference type="IntAct" id="P34788">
    <property type="interactions" value="3"/>
</dbReference>
<dbReference type="STRING" id="3702.P34788"/>
<dbReference type="iPTMnet" id="P34788"/>
<dbReference type="MetOSite" id="P34788"/>
<dbReference type="PaxDb" id="3702-AT1G22780.1"/>
<dbReference type="ProteomicsDB" id="226879"/>
<dbReference type="EnsemblPlants" id="AT1G22780.1">
    <property type="protein sequence ID" value="AT1G22780.1"/>
    <property type="gene ID" value="AT1G22780"/>
</dbReference>
<dbReference type="EnsemblPlants" id="AT1G34030.1">
    <property type="protein sequence ID" value="AT1G34030.1"/>
    <property type="gene ID" value="AT1G34030"/>
</dbReference>
<dbReference type="EnsemblPlants" id="AT4G09800.1">
    <property type="protein sequence ID" value="AT4G09800.1"/>
    <property type="gene ID" value="AT4G09800"/>
</dbReference>
<dbReference type="GeneID" id="826569"/>
<dbReference type="GeneID" id="838884"/>
<dbReference type="GeneID" id="840300"/>
<dbReference type="Gramene" id="AT1G22780.1">
    <property type="protein sequence ID" value="AT1G22780.1"/>
    <property type="gene ID" value="AT1G22780"/>
</dbReference>
<dbReference type="Gramene" id="AT1G34030.1">
    <property type="protein sequence ID" value="AT1G34030.1"/>
    <property type="gene ID" value="AT1G34030"/>
</dbReference>
<dbReference type="Gramene" id="AT4G09800.1">
    <property type="protein sequence ID" value="AT4G09800.1"/>
    <property type="gene ID" value="AT4G09800"/>
</dbReference>
<dbReference type="KEGG" id="ath:AT1G22780"/>
<dbReference type="KEGG" id="ath:AT1G34030"/>
<dbReference type="KEGG" id="ath:AT4G09800"/>
<dbReference type="Araport" id="AT1G22780"/>
<dbReference type="Araport" id="AT1G34030"/>
<dbReference type="Araport" id="AT4G09800"/>
<dbReference type="TAIR" id="AT1G22780">
    <property type="gene designation" value="PFL"/>
</dbReference>
<dbReference type="TAIR" id="AT1G34030"/>
<dbReference type="TAIR" id="AT4G09800">
    <property type="gene designation" value="RPS18C"/>
</dbReference>
<dbReference type="eggNOG" id="KOG3311">
    <property type="taxonomic scope" value="Eukaryota"/>
</dbReference>
<dbReference type="HOGENOM" id="CLU_103849_0_1_1"/>
<dbReference type="InParanoid" id="P34788"/>
<dbReference type="OMA" id="SYKGVRH"/>
<dbReference type="OrthoDB" id="1578472at2759"/>
<dbReference type="PhylomeDB" id="P34788"/>
<dbReference type="CD-CODE" id="4299E36E">
    <property type="entry name" value="Nucleolus"/>
</dbReference>
<dbReference type="PRO" id="PR:P34788"/>
<dbReference type="Proteomes" id="UP000006548">
    <property type="component" value="Chromosome 1"/>
</dbReference>
<dbReference type="Proteomes" id="UP000006548">
    <property type="component" value="Chromosome 4"/>
</dbReference>
<dbReference type="ExpressionAtlas" id="P34788">
    <property type="expression patterns" value="baseline and differential"/>
</dbReference>
<dbReference type="GO" id="GO:0005829">
    <property type="term" value="C:cytosol"/>
    <property type="evidence" value="ECO:0007005"/>
    <property type="project" value="TAIR"/>
</dbReference>
<dbReference type="GO" id="GO:0022626">
    <property type="term" value="C:cytosolic ribosome"/>
    <property type="evidence" value="ECO:0007005"/>
    <property type="project" value="TAIR"/>
</dbReference>
<dbReference type="GO" id="GO:0022627">
    <property type="term" value="C:cytosolic small ribosomal subunit"/>
    <property type="evidence" value="ECO:0007005"/>
    <property type="project" value="TAIR"/>
</dbReference>
<dbReference type="GO" id="GO:0005730">
    <property type="term" value="C:nucleolus"/>
    <property type="evidence" value="ECO:0007005"/>
    <property type="project" value="TAIR"/>
</dbReference>
<dbReference type="GO" id="GO:0005634">
    <property type="term" value="C:nucleus"/>
    <property type="evidence" value="ECO:0007005"/>
    <property type="project" value="TAIR"/>
</dbReference>
<dbReference type="GO" id="GO:0009505">
    <property type="term" value="C:plant-type cell wall"/>
    <property type="evidence" value="ECO:0007005"/>
    <property type="project" value="TAIR"/>
</dbReference>
<dbReference type="GO" id="GO:0000325">
    <property type="term" value="C:plant-type vacuole"/>
    <property type="evidence" value="ECO:0007005"/>
    <property type="project" value="TAIR"/>
</dbReference>
<dbReference type="GO" id="GO:0005886">
    <property type="term" value="C:plasma membrane"/>
    <property type="evidence" value="ECO:0007005"/>
    <property type="project" value="TAIR"/>
</dbReference>
<dbReference type="GO" id="GO:0009506">
    <property type="term" value="C:plasmodesma"/>
    <property type="evidence" value="ECO:0007005"/>
    <property type="project" value="TAIR"/>
</dbReference>
<dbReference type="GO" id="GO:0003729">
    <property type="term" value="F:mRNA binding"/>
    <property type="evidence" value="ECO:0000314"/>
    <property type="project" value="TAIR"/>
</dbReference>
<dbReference type="GO" id="GO:0019843">
    <property type="term" value="F:rRNA binding"/>
    <property type="evidence" value="ECO:0007669"/>
    <property type="project" value="UniProtKB-KW"/>
</dbReference>
<dbReference type="GO" id="GO:0003735">
    <property type="term" value="F:structural constituent of ribosome"/>
    <property type="evidence" value="ECO:0000314"/>
    <property type="project" value="CAFA"/>
</dbReference>
<dbReference type="GO" id="GO:0006413">
    <property type="term" value="P:translational initiation"/>
    <property type="evidence" value="ECO:0000304"/>
    <property type="project" value="TAIR"/>
</dbReference>
<dbReference type="FunFam" id="1.10.8.50:FF:000002">
    <property type="entry name" value="40S ribosomal protein S18"/>
    <property type="match status" value="1"/>
</dbReference>
<dbReference type="FunFam" id="4.10.910.10:FF:000002">
    <property type="entry name" value="40S ribosomal protein S18"/>
    <property type="match status" value="1"/>
</dbReference>
<dbReference type="Gene3D" id="1.10.8.50">
    <property type="match status" value="1"/>
</dbReference>
<dbReference type="Gene3D" id="4.10.910.10">
    <property type="entry name" value="30s ribosomal protein s13, domain 2"/>
    <property type="match status" value="1"/>
</dbReference>
<dbReference type="HAMAP" id="MF_01315">
    <property type="entry name" value="Ribosomal_uS13"/>
    <property type="match status" value="1"/>
</dbReference>
<dbReference type="InterPro" id="IPR027437">
    <property type="entry name" value="Rbsml_uS13_C"/>
</dbReference>
<dbReference type="InterPro" id="IPR001892">
    <property type="entry name" value="Ribosomal_uS13"/>
</dbReference>
<dbReference type="InterPro" id="IPR010979">
    <property type="entry name" value="Ribosomal_uS13-like_H2TH"/>
</dbReference>
<dbReference type="InterPro" id="IPR018269">
    <property type="entry name" value="Ribosomal_uS13_CS"/>
</dbReference>
<dbReference type="NCBIfam" id="NF003140">
    <property type="entry name" value="PRK04053.1"/>
    <property type="match status" value="1"/>
</dbReference>
<dbReference type="PANTHER" id="PTHR10871">
    <property type="entry name" value="30S RIBOSOMAL PROTEIN S13/40S RIBOSOMAL PROTEIN S18"/>
    <property type="match status" value="1"/>
</dbReference>
<dbReference type="PANTHER" id="PTHR10871:SF3">
    <property type="entry name" value="SMALL RIBOSOMAL SUBUNIT PROTEIN US13"/>
    <property type="match status" value="1"/>
</dbReference>
<dbReference type="Pfam" id="PF00416">
    <property type="entry name" value="Ribosomal_S13"/>
    <property type="match status" value="1"/>
</dbReference>
<dbReference type="PIRSF" id="PIRSF002134">
    <property type="entry name" value="Ribosomal_S13"/>
    <property type="match status" value="1"/>
</dbReference>
<dbReference type="SUPFAM" id="SSF46946">
    <property type="entry name" value="S13-like H2TH domain"/>
    <property type="match status" value="1"/>
</dbReference>
<dbReference type="PROSITE" id="PS00646">
    <property type="entry name" value="RIBOSOMAL_S13_1"/>
    <property type="match status" value="1"/>
</dbReference>
<dbReference type="PROSITE" id="PS50159">
    <property type="entry name" value="RIBOSOMAL_S13_2"/>
    <property type="match status" value="1"/>
</dbReference>
<keyword id="KW-0007">Acetylation</keyword>
<keyword id="KW-0963">Cytoplasm</keyword>
<keyword id="KW-0903">Direct protein sequencing</keyword>
<keyword id="KW-1185">Reference proteome</keyword>
<keyword id="KW-0687">Ribonucleoprotein</keyword>
<keyword id="KW-0689">Ribosomal protein</keyword>
<keyword id="KW-0694">RNA-binding</keyword>
<keyword id="KW-0699">rRNA-binding</keyword>
<proteinExistence type="evidence at protein level"/>
<protein>
    <recommendedName>
        <fullName evidence="2">Small ribosomal subunit protein uS13z/uS13y/uS13x</fullName>
    </recommendedName>
    <alternativeName>
        <fullName>40S ribosomal protein S18</fullName>
    </alternativeName>
</protein>
<accession>P34788</accession>
<accession>Q94K22</accession>
<name>RS18_ARATH</name>
<gene>
    <name type="primary">RPS18A</name>
    <name type="synonym">PFL</name>
    <name type="ordered locus">At1g22780</name>
    <name type="ORF">T22J18.5</name>
</gene>
<gene>
    <name type="primary">RPS18B</name>
    <name type="ordered locus">At1g34030</name>
    <name type="ORF">F12G12.15</name>
    <name type="ORF">T15K4.9</name>
</gene>
<gene>
    <name type="primary">RPS18C</name>
    <name type="ordered locus">At4g09800</name>
    <name type="ORF">F17A8.150</name>
</gene>
<comment type="function">
    <text evidence="1">Located at the top of the head of the 40S subunit, it contacts several helices of the 18S rRNA.</text>
</comment>
<comment type="subcellular location">
    <subcellularLocation>
        <location>Cytoplasm</location>
    </subcellularLocation>
</comment>
<comment type="similarity">
    <text evidence="3">Belongs to the universal ribosomal protein uS13 family.</text>
</comment>
<organism>
    <name type="scientific">Arabidopsis thaliana</name>
    <name type="common">Mouse-ear cress</name>
    <dbReference type="NCBI Taxonomy" id="3702"/>
    <lineage>
        <taxon>Eukaryota</taxon>
        <taxon>Viridiplantae</taxon>
        <taxon>Streptophyta</taxon>
        <taxon>Embryophyta</taxon>
        <taxon>Tracheophyta</taxon>
        <taxon>Spermatophyta</taxon>
        <taxon>Magnoliopsida</taxon>
        <taxon>eudicotyledons</taxon>
        <taxon>Gunneridae</taxon>
        <taxon>Pentapetalae</taxon>
        <taxon>rosids</taxon>
        <taxon>malvids</taxon>
        <taxon>Brassicales</taxon>
        <taxon>Brassicaceae</taxon>
        <taxon>Camelineae</taxon>
        <taxon>Arabidopsis</taxon>
    </lineage>
</organism>
<feature type="initiator methionine" description="Removed" evidence="4">
    <location>
        <position position="1"/>
    </location>
</feature>
<feature type="chain" id="PRO_0000132224" description="Small ribosomal subunit protein uS13z/uS13y/uS13x">
    <location>
        <begin position="2"/>
        <end position="152"/>
    </location>
</feature>
<feature type="modified residue" description="N-acetylserine" evidence="4">
    <location>
        <position position="2"/>
    </location>
</feature>
<feature type="sequence conflict" description="In Ref. 6; AAK43840/AAL47385." evidence="3" ref="6">
    <original>A</original>
    <variation>T</variation>
    <location>
        <position position="48"/>
    </location>
</feature>
<evidence type="ECO:0000250" key="1"/>
<evidence type="ECO:0000303" key="2">
    <source>
    </source>
</evidence>
<evidence type="ECO:0000305" key="3"/>
<evidence type="ECO:0007744" key="4">
    <source>
    </source>
</evidence>